<evidence type="ECO:0000250" key="1"/>
<evidence type="ECO:0000255" key="2">
    <source>
        <dbReference type="HAMAP-Rule" id="MF_01356"/>
    </source>
</evidence>
<evidence type="ECO:0000305" key="3"/>
<sequence>MGVIQTLDRLMTNPMPEGRVEDILRPEGENPLLEKGYVTTSVDALLNWARTGSMWPMTFGLACCAVEMMHAGAARLDLDRYGVVFRPSPRQSDVMIVAGTLVNKMAPALRKVYDQMPDPKWVISMGSCANGGGYYHYSYSVVRGCDRIVPVDIYVPGCPPTAEALVYGILQLQKKIWRTQTIAR</sequence>
<feature type="chain" id="PRO_0000358510" description="NADH-quinone oxidoreductase subunit B">
    <location>
        <begin position="1"/>
        <end position="184"/>
    </location>
</feature>
<feature type="binding site" evidence="2">
    <location>
        <position position="63"/>
    </location>
    <ligand>
        <name>[4Fe-4S] cluster</name>
        <dbReference type="ChEBI" id="CHEBI:49883"/>
    </ligand>
</feature>
<feature type="binding site" evidence="2">
    <location>
        <position position="64"/>
    </location>
    <ligand>
        <name>[4Fe-4S] cluster</name>
        <dbReference type="ChEBI" id="CHEBI:49883"/>
    </ligand>
</feature>
<feature type="binding site" evidence="2">
    <location>
        <position position="128"/>
    </location>
    <ligand>
        <name>[4Fe-4S] cluster</name>
        <dbReference type="ChEBI" id="CHEBI:49883"/>
    </ligand>
</feature>
<feature type="binding site" evidence="2">
    <location>
        <position position="158"/>
    </location>
    <ligand>
        <name>[4Fe-4S] cluster</name>
        <dbReference type="ChEBI" id="CHEBI:49883"/>
    </ligand>
</feature>
<keyword id="KW-0004">4Fe-4S</keyword>
<keyword id="KW-0997">Cell inner membrane</keyword>
<keyword id="KW-1003">Cell membrane</keyword>
<keyword id="KW-0408">Iron</keyword>
<keyword id="KW-0411">Iron-sulfur</keyword>
<keyword id="KW-0472">Membrane</keyword>
<keyword id="KW-0479">Metal-binding</keyword>
<keyword id="KW-0520">NAD</keyword>
<keyword id="KW-0874">Quinone</keyword>
<keyword id="KW-1278">Translocase</keyword>
<keyword id="KW-0813">Transport</keyword>
<keyword id="KW-0830">Ubiquinone</keyword>
<reference key="1">
    <citation type="journal article" date="2005" name="Genome Res.">
        <title>Comparative and functional genomic analyses of the pathogenicity of phytopathogen Xanthomonas campestris pv. campestris.</title>
        <authorList>
            <person name="Qian W."/>
            <person name="Jia Y."/>
            <person name="Ren S.-X."/>
            <person name="He Y.-Q."/>
            <person name="Feng J.-X."/>
            <person name="Lu L.-F."/>
            <person name="Sun Q."/>
            <person name="Ying G."/>
            <person name="Tang D.-J."/>
            <person name="Tang H."/>
            <person name="Wu W."/>
            <person name="Hao P."/>
            <person name="Wang L."/>
            <person name="Jiang B.-L."/>
            <person name="Zeng S."/>
            <person name="Gu W.-Y."/>
            <person name="Lu G."/>
            <person name="Rong L."/>
            <person name="Tian Y."/>
            <person name="Yao Z."/>
            <person name="Fu G."/>
            <person name="Chen B."/>
            <person name="Fang R."/>
            <person name="Qiang B."/>
            <person name="Chen Z."/>
            <person name="Zhao G.-P."/>
            <person name="Tang J.-L."/>
            <person name="He C."/>
        </authorList>
    </citation>
    <scope>NUCLEOTIDE SEQUENCE [LARGE SCALE GENOMIC DNA]</scope>
    <source>
        <strain>8004</strain>
    </source>
</reference>
<comment type="function">
    <text evidence="1">NDH-1 shuttles electrons from NADH, via FMN and iron-sulfur (Fe-S) centers, to quinones in the respiratory chain. Couples the redox reaction to proton translocation (for every two electrons transferred, four hydrogen ions are translocated across the cytoplasmic membrane), and thus conserves the redox energy in a proton gradient (By similarity).</text>
</comment>
<comment type="catalytic activity">
    <reaction evidence="2">
        <text>a quinone + NADH + 5 H(+)(in) = a quinol + NAD(+) + 4 H(+)(out)</text>
        <dbReference type="Rhea" id="RHEA:57888"/>
        <dbReference type="ChEBI" id="CHEBI:15378"/>
        <dbReference type="ChEBI" id="CHEBI:24646"/>
        <dbReference type="ChEBI" id="CHEBI:57540"/>
        <dbReference type="ChEBI" id="CHEBI:57945"/>
        <dbReference type="ChEBI" id="CHEBI:132124"/>
    </reaction>
</comment>
<comment type="cofactor">
    <cofactor evidence="2">
        <name>[4Fe-4S] cluster</name>
        <dbReference type="ChEBI" id="CHEBI:49883"/>
    </cofactor>
    <text evidence="2">Binds 1 [4Fe-4S] cluster.</text>
</comment>
<comment type="subunit">
    <text evidence="2">NDH-1 is composed of 14 different subunits. Subunits NuoB, C, D, E, F, and G constitute the peripheral sector of the complex.</text>
</comment>
<comment type="subcellular location">
    <subcellularLocation>
        <location evidence="2">Cell inner membrane</location>
        <topology evidence="2">Peripheral membrane protein</topology>
        <orientation evidence="2">Cytoplasmic side</orientation>
    </subcellularLocation>
</comment>
<comment type="similarity">
    <text evidence="2">Belongs to the complex I 20 kDa subunit family.</text>
</comment>
<comment type="sequence caution" evidence="3">
    <conflict type="erroneous initiation">
        <sequence resource="EMBL-CDS" id="AAY48656"/>
    </conflict>
</comment>
<gene>
    <name evidence="2" type="primary">nuoB</name>
    <name type="ordered locus">XC_1590</name>
</gene>
<dbReference type="EC" id="7.1.1.-" evidence="2"/>
<dbReference type="EMBL" id="CP000050">
    <property type="protein sequence ID" value="AAY48656.1"/>
    <property type="status" value="ALT_INIT"/>
    <property type="molecule type" value="Genomic_DNA"/>
</dbReference>
<dbReference type="RefSeq" id="WP_016944318.1">
    <property type="nucleotide sequence ID" value="NZ_CP155948.1"/>
</dbReference>
<dbReference type="SMR" id="Q4UWB7"/>
<dbReference type="KEGG" id="xcb:XC_1590"/>
<dbReference type="HOGENOM" id="CLU_055737_7_3_6"/>
<dbReference type="Proteomes" id="UP000000420">
    <property type="component" value="Chromosome"/>
</dbReference>
<dbReference type="GO" id="GO:0005886">
    <property type="term" value="C:plasma membrane"/>
    <property type="evidence" value="ECO:0007669"/>
    <property type="project" value="UniProtKB-SubCell"/>
</dbReference>
<dbReference type="GO" id="GO:0045271">
    <property type="term" value="C:respiratory chain complex I"/>
    <property type="evidence" value="ECO:0007669"/>
    <property type="project" value="TreeGrafter"/>
</dbReference>
<dbReference type="GO" id="GO:0051539">
    <property type="term" value="F:4 iron, 4 sulfur cluster binding"/>
    <property type="evidence" value="ECO:0007669"/>
    <property type="project" value="UniProtKB-KW"/>
</dbReference>
<dbReference type="GO" id="GO:0005506">
    <property type="term" value="F:iron ion binding"/>
    <property type="evidence" value="ECO:0007669"/>
    <property type="project" value="UniProtKB-UniRule"/>
</dbReference>
<dbReference type="GO" id="GO:0008137">
    <property type="term" value="F:NADH dehydrogenase (ubiquinone) activity"/>
    <property type="evidence" value="ECO:0007669"/>
    <property type="project" value="InterPro"/>
</dbReference>
<dbReference type="GO" id="GO:0050136">
    <property type="term" value="F:NADH:ubiquinone reductase (non-electrogenic) activity"/>
    <property type="evidence" value="ECO:0007669"/>
    <property type="project" value="UniProtKB-UniRule"/>
</dbReference>
<dbReference type="GO" id="GO:0048038">
    <property type="term" value="F:quinone binding"/>
    <property type="evidence" value="ECO:0007669"/>
    <property type="project" value="UniProtKB-KW"/>
</dbReference>
<dbReference type="GO" id="GO:0009060">
    <property type="term" value="P:aerobic respiration"/>
    <property type="evidence" value="ECO:0007669"/>
    <property type="project" value="TreeGrafter"/>
</dbReference>
<dbReference type="GO" id="GO:0015990">
    <property type="term" value="P:electron transport coupled proton transport"/>
    <property type="evidence" value="ECO:0007669"/>
    <property type="project" value="TreeGrafter"/>
</dbReference>
<dbReference type="FunFam" id="3.40.50.12280:FF:000001">
    <property type="entry name" value="NADH-quinone oxidoreductase subunit B 2"/>
    <property type="match status" value="1"/>
</dbReference>
<dbReference type="Gene3D" id="3.40.50.12280">
    <property type="match status" value="1"/>
</dbReference>
<dbReference type="HAMAP" id="MF_01356">
    <property type="entry name" value="NDH1_NuoB"/>
    <property type="match status" value="1"/>
</dbReference>
<dbReference type="InterPro" id="IPR006137">
    <property type="entry name" value="NADH_UbQ_OxRdtase-like_20kDa"/>
</dbReference>
<dbReference type="InterPro" id="IPR006138">
    <property type="entry name" value="NADH_UQ_OxRdtase_20Kd_su"/>
</dbReference>
<dbReference type="NCBIfam" id="TIGR01957">
    <property type="entry name" value="nuoB_fam"/>
    <property type="match status" value="1"/>
</dbReference>
<dbReference type="NCBIfam" id="NF005012">
    <property type="entry name" value="PRK06411.1"/>
    <property type="match status" value="1"/>
</dbReference>
<dbReference type="PANTHER" id="PTHR11995">
    <property type="entry name" value="NADH DEHYDROGENASE"/>
    <property type="match status" value="1"/>
</dbReference>
<dbReference type="PANTHER" id="PTHR11995:SF14">
    <property type="entry name" value="NADH DEHYDROGENASE [UBIQUINONE] IRON-SULFUR PROTEIN 7, MITOCHONDRIAL"/>
    <property type="match status" value="1"/>
</dbReference>
<dbReference type="Pfam" id="PF01058">
    <property type="entry name" value="Oxidored_q6"/>
    <property type="match status" value="1"/>
</dbReference>
<dbReference type="SUPFAM" id="SSF56770">
    <property type="entry name" value="HydA/Nqo6-like"/>
    <property type="match status" value="1"/>
</dbReference>
<dbReference type="PROSITE" id="PS01150">
    <property type="entry name" value="COMPLEX1_20K"/>
    <property type="match status" value="1"/>
</dbReference>
<accession>Q4UWB7</accession>
<proteinExistence type="inferred from homology"/>
<organism>
    <name type="scientific">Xanthomonas campestris pv. campestris (strain 8004)</name>
    <dbReference type="NCBI Taxonomy" id="314565"/>
    <lineage>
        <taxon>Bacteria</taxon>
        <taxon>Pseudomonadati</taxon>
        <taxon>Pseudomonadota</taxon>
        <taxon>Gammaproteobacteria</taxon>
        <taxon>Lysobacterales</taxon>
        <taxon>Lysobacteraceae</taxon>
        <taxon>Xanthomonas</taxon>
    </lineage>
</organism>
<protein>
    <recommendedName>
        <fullName evidence="2">NADH-quinone oxidoreductase subunit B</fullName>
        <ecNumber evidence="2">7.1.1.-</ecNumber>
    </recommendedName>
    <alternativeName>
        <fullName evidence="2">NADH dehydrogenase I subunit B</fullName>
    </alternativeName>
    <alternativeName>
        <fullName evidence="2">NDH-1 subunit B</fullName>
    </alternativeName>
</protein>
<name>NUOB_XANC8</name>